<gene>
    <name evidence="1" type="primary">rsmJ</name>
</gene>
<comment type="function">
    <text evidence="1">Specifically methylates the guanosine in position 1516 of 16S rRNA.</text>
</comment>
<comment type="catalytic activity">
    <reaction evidence="1">
        <text>guanosine(1516) in 16S rRNA + S-adenosyl-L-methionine = N(2)-methylguanosine(1516) in 16S rRNA + S-adenosyl-L-homocysteine + H(+)</text>
        <dbReference type="Rhea" id="RHEA:43220"/>
        <dbReference type="Rhea" id="RHEA-COMP:10412"/>
        <dbReference type="Rhea" id="RHEA-COMP:10413"/>
        <dbReference type="ChEBI" id="CHEBI:15378"/>
        <dbReference type="ChEBI" id="CHEBI:57856"/>
        <dbReference type="ChEBI" id="CHEBI:59789"/>
        <dbReference type="ChEBI" id="CHEBI:74269"/>
        <dbReference type="ChEBI" id="CHEBI:74481"/>
        <dbReference type="EC" id="2.1.1.242"/>
    </reaction>
</comment>
<comment type="subcellular location">
    <subcellularLocation>
        <location evidence="1">Cytoplasm</location>
    </subcellularLocation>
</comment>
<comment type="similarity">
    <text evidence="1">Belongs to the methyltransferase superfamily. RsmJ family.</text>
</comment>
<sequence>MTDILIDDTATEAVRTLIRAFPLVPVSQPPEQGSYLLAEHDTVSLRLVGEKSNVIVDFTSGAAQYRRTKGGGELIAKAVNHTAHPTVWDATAGLGRDSFVLASLGLTVTAFEQHPAVACLLSDGIRRALLNPETQDTAARINLHFGNAAEQMPALVKTQGKPDIVYLDPMYPERRKSAAVKKEMAYFHRLVGEAQDEVVLLHTARQTAKKRVVVKRPRLGEHLAGQAPAYQYTGKSTRFDVYLPYGADKG</sequence>
<protein>
    <recommendedName>
        <fullName evidence="1">Ribosomal RNA small subunit methyltransferase J</fullName>
        <ecNumber evidence="1">2.1.1.242</ecNumber>
    </recommendedName>
    <alternativeName>
        <fullName evidence="1">16S rRNA m2G1516 methyltransferase</fullName>
    </alternativeName>
    <alternativeName>
        <fullName evidence="1">rRNA (guanine-N(2)-)-methyltransferase</fullName>
    </alternativeName>
</protein>
<organism>
    <name type="scientific">Neisseria gonorrhoeae</name>
    <dbReference type="NCBI Taxonomy" id="485"/>
    <lineage>
        <taxon>Bacteria</taxon>
        <taxon>Pseudomonadati</taxon>
        <taxon>Pseudomonadota</taxon>
        <taxon>Betaproteobacteria</taxon>
        <taxon>Neisseriales</taxon>
        <taxon>Neisseriaceae</taxon>
        <taxon>Neisseria</taxon>
    </lineage>
</organism>
<feature type="chain" id="PRO_0000212077" description="Ribosomal RNA small subunit methyltransferase J">
    <location>
        <begin position="1"/>
        <end position="250"/>
    </location>
</feature>
<feature type="binding site" evidence="1">
    <location>
        <begin position="96"/>
        <end position="97"/>
    </location>
    <ligand>
        <name>S-adenosyl-L-methionine</name>
        <dbReference type="ChEBI" id="CHEBI:59789"/>
    </ligand>
</feature>
<feature type="binding site" evidence="1">
    <location>
        <position position="168"/>
    </location>
    <ligand>
        <name>S-adenosyl-L-methionine</name>
        <dbReference type="ChEBI" id="CHEBI:59789"/>
    </ligand>
</feature>
<feature type="strand" evidence="2">
    <location>
        <begin position="3"/>
        <end position="6"/>
    </location>
</feature>
<feature type="helix" evidence="2">
    <location>
        <begin position="12"/>
        <end position="18"/>
    </location>
</feature>
<feature type="strand" evidence="2">
    <location>
        <begin position="24"/>
        <end position="28"/>
    </location>
</feature>
<feature type="strand" evidence="2">
    <location>
        <begin position="31"/>
        <end position="39"/>
    </location>
</feature>
<feature type="strand" evidence="2">
    <location>
        <begin position="42"/>
        <end position="47"/>
    </location>
</feature>
<feature type="helix" evidence="2">
    <location>
        <begin position="61"/>
        <end position="67"/>
    </location>
</feature>
<feature type="helix" evidence="2">
    <location>
        <begin position="74"/>
        <end position="78"/>
    </location>
</feature>
<feature type="helix" evidence="2">
    <location>
        <begin position="81"/>
        <end position="83"/>
    </location>
</feature>
<feature type="strand" evidence="2">
    <location>
        <begin position="87"/>
        <end position="89"/>
    </location>
</feature>
<feature type="helix" evidence="2">
    <location>
        <begin position="96"/>
        <end position="103"/>
    </location>
</feature>
<feature type="strand" evidence="2">
    <location>
        <begin position="108"/>
        <end position="112"/>
    </location>
</feature>
<feature type="helix" evidence="2">
    <location>
        <begin position="115"/>
        <end position="130"/>
    </location>
</feature>
<feature type="helix" evidence="2">
    <location>
        <begin position="132"/>
        <end position="138"/>
    </location>
</feature>
<feature type="strand" evidence="2">
    <location>
        <begin position="141"/>
        <end position="146"/>
    </location>
</feature>
<feature type="helix" evidence="2">
    <location>
        <begin position="148"/>
        <end position="159"/>
    </location>
</feature>
<feature type="strand" evidence="2">
    <location>
        <begin position="163"/>
        <end position="167"/>
    </location>
</feature>
<feature type="helix" evidence="2">
    <location>
        <begin position="185"/>
        <end position="191"/>
    </location>
</feature>
<feature type="helix" evidence="2">
    <location>
        <begin position="193"/>
        <end position="207"/>
    </location>
</feature>
<feature type="strand" evidence="2">
    <location>
        <begin position="209"/>
        <end position="217"/>
    </location>
</feature>
<feature type="helix" evidence="2">
    <location>
        <begin position="223"/>
        <end position="225"/>
    </location>
</feature>
<feature type="strand" evidence="2">
    <location>
        <begin position="229"/>
        <end position="233"/>
    </location>
</feature>
<feature type="strand" evidence="2">
    <location>
        <begin position="235"/>
        <end position="242"/>
    </location>
</feature>
<name>RSMJ_NEIGO</name>
<keyword id="KW-0002">3D-structure</keyword>
<keyword id="KW-0963">Cytoplasm</keyword>
<keyword id="KW-0489">Methyltransferase</keyword>
<keyword id="KW-0698">rRNA processing</keyword>
<keyword id="KW-0949">S-adenosyl-L-methionine</keyword>
<keyword id="KW-0808">Transferase</keyword>
<dbReference type="EC" id="2.1.1.242" evidence="1"/>
<dbReference type="EMBL" id="U65994">
    <property type="protein sequence ID" value="AAC82508.1"/>
    <property type="molecule type" value="Genomic_DNA"/>
</dbReference>
<dbReference type="RefSeq" id="WP_003689730.1">
    <property type="nucleotide sequence ID" value="NZ_WHPL01000001.1"/>
</dbReference>
<dbReference type="PDB" id="2R6Z">
    <property type="method" value="X-ray"/>
    <property type="resolution" value="1.80 A"/>
    <property type="chains" value="A/B=1-250"/>
</dbReference>
<dbReference type="PDBsum" id="2R6Z"/>
<dbReference type="SMR" id="P72077"/>
<dbReference type="EvolutionaryTrace" id="P72077"/>
<dbReference type="GO" id="GO:0005737">
    <property type="term" value="C:cytoplasm"/>
    <property type="evidence" value="ECO:0007669"/>
    <property type="project" value="UniProtKB-SubCell"/>
</dbReference>
<dbReference type="GO" id="GO:0008990">
    <property type="term" value="F:rRNA (guanine-N2-)-methyltransferase activity"/>
    <property type="evidence" value="ECO:0007669"/>
    <property type="project" value="UniProtKB-UniRule"/>
</dbReference>
<dbReference type="Gene3D" id="3.40.50.150">
    <property type="entry name" value="Vaccinia Virus protein VP39"/>
    <property type="match status" value="1"/>
</dbReference>
<dbReference type="Gene3D" id="3.40.1630.10">
    <property type="entry name" value="YhiQ-like domain"/>
    <property type="match status" value="1"/>
</dbReference>
<dbReference type="HAMAP" id="MF_01523">
    <property type="entry name" value="16SrRNA_methyltr_J"/>
    <property type="match status" value="1"/>
</dbReference>
<dbReference type="InterPro" id="IPR007536">
    <property type="entry name" value="16SrRNA_methylTrfase_J"/>
</dbReference>
<dbReference type="InterPro" id="IPR029063">
    <property type="entry name" value="SAM-dependent_MTases_sf"/>
</dbReference>
<dbReference type="PANTHER" id="PTHR36112">
    <property type="entry name" value="RIBOSOMAL RNA SMALL SUBUNIT METHYLTRANSFERASE J"/>
    <property type="match status" value="1"/>
</dbReference>
<dbReference type="PANTHER" id="PTHR36112:SF1">
    <property type="entry name" value="RIBOSOMAL RNA SMALL SUBUNIT METHYLTRANSFERASE J"/>
    <property type="match status" value="1"/>
</dbReference>
<dbReference type="Pfam" id="PF04445">
    <property type="entry name" value="SAM_MT"/>
    <property type="match status" value="1"/>
</dbReference>
<dbReference type="SUPFAM" id="SSF53335">
    <property type="entry name" value="S-adenosyl-L-methionine-dependent methyltransferases"/>
    <property type="match status" value="1"/>
</dbReference>
<reference key="1">
    <citation type="journal article" date="1998" name="Gene">
        <title>Neisseria gonorrhoeae contains multiple copies of a gene that may encode a site-specific recombinase and is associated with DNA rearrangements.</title>
        <authorList>
            <person name="Carrick C.S."/>
            <person name="Fyfe J.A.M."/>
            <person name="Davies J.K."/>
        </authorList>
    </citation>
    <scope>NUCLEOTIDE SEQUENCE [GENOMIC DNA]</scope>
    <source>
        <strain>MS11</strain>
    </source>
</reference>
<reference key="2">
    <citation type="submission" date="2009-02" db="PDB data bank">
        <title>Crystal structure of the SAM-dependent methyltransferase NGO1261 from Neisseria gonorrhoeae.</title>
        <authorList>
            <consortium name="Northeast structural genomics consortium (NESG)"/>
        </authorList>
    </citation>
    <scope>X-RAY CRYSTALLOGRAPHY (1.8 ANGSTROMS)</scope>
</reference>
<accession>P72077</accession>
<proteinExistence type="evidence at protein level"/>
<evidence type="ECO:0000255" key="1">
    <source>
        <dbReference type="HAMAP-Rule" id="MF_01523"/>
    </source>
</evidence>
<evidence type="ECO:0007829" key="2">
    <source>
        <dbReference type="PDB" id="2R6Z"/>
    </source>
</evidence>